<name>RUVC_SHEB5</name>
<accession>A3D479</accession>
<dbReference type="EC" id="3.1.21.10" evidence="1"/>
<dbReference type="EMBL" id="CP000563">
    <property type="protein sequence ID" value="ABN61542.1"/>
    <property type="molecule type" value="Genomic_DNA"/>
</dbReference>
<dbReference type="RefSeq" id="WP_006081743.1">
    <property type="nucleotide sequence ID" value="NC_009052.1"/>
</dbReference>
<dbReference type="SMR" id="A3D479"/>
<dbReference type="STRING" id="325240.Sbal_2040"/>
<dbReference type="GeneID" id="11772538"/>
<dbReference type="KEGG" id="sbl:Sbal_2040"/>
<dbReference type="HOGENOM" id="CLU_091257_2_1_6"/>
<dbReference type="OrthoDB" id="9805499at2"/>
<dbReference type="Proteomes" id="UP000001557">
    <property type="component" value="Chromosome"/>
</dbReference>
<dbReference type="GO" id="GO:0005737">
    <property type="term" value="C:cytoplasm"/>
    <property type="evidence" value="ECO:0007669"/>
    <property type="project" value="UniProtKB-SubCell"/>
</dbReference>
<dbReference type="GO" id="GO:0048476">
    <property type="term" value="C:Holliday junction resolvase complex"/>
    <property type="evidence" value="ECO:0007669"/>
    <property type="project" value="UniProtKB-UniRule"/>
</dbReference>
<dbReference type="GO" id="GO:0008821">
    <property type="term" value="F:crossover junction DNA endonuclease activity"/>
    <property type="evidence" value="ECO:0007669"/>
    <property type="project" value="UniProtKB-UniRule"/>
</dbReference>
<dbReference type="GO" id="GO:0003677">
    <property type="term" value="F:DNA binding"/>
    <property type="evidence" value="ECO:0007669"/>
    <property type="project" value="UniProtKB-KW"/>
</dbReference>
<dbReference type="GO" id="GO:0000287">
    <property type="term" value="F:magnesium ion binding"/>
    <property type="evidence" value="ECO:0007669"/>
    <property type="project" value="UniProtKB-UniRule"/>
</dbReference>
<dbReference type="GO" id="GO:0006310">
    <property type="term" value="P:DNA recombination"/>
    <property type="evidence" value="ECO:0007669"/>
    <property type="project" value="UniProtKB-UniRule"/>
</dbReference>
<dbReference type="GO" id="GO:0006281">
    <property type="term" value="P:DNA repair"/>
    <property type="evidence" value="ECO:0007669"/>
    <property type="project" value="UniProtKB-UniRule"/>
</dbReference>
<dbReference type="CDD" id="cd16962">
    <property type="entry name" value="RuvC"/>
    <property type="match status" value="1"/>
</dbReference>
<dbReference type="FunFam" id="3.30.420.10:FF:000002">
    <property type="entry name" value="Crossover junction endodeoxyribonuclease RuvC"/>
    <property type="match status" value="1"/>
</dbReference>
<dbReference type="Gene3D" id="3.30.420.10">
    <property type="entry name" value="Ribonuclease H-like superfamily/Ribonuclease H"/>
    <property type="match status" value="1"/>
</dbReference>
<dbReference type="HAMAP" id="MF_00034">
    <property type="entry name" value="RuvC"/>
    <property type="match status" value="1"/>
</dbReference>
<dbReference type="InterPro" id="IPR012337">
    <property type="entry name" value="RNaseH-like_sf"/>
</dbReference>
<dbReference type="InterPro" id="IPR036397">
    <property type="entry name" value="RNaseH_sf"/>
</dbReference>
<dbReference type="InterPro" id="IPR020563">
    <property type="entry name" value="X-over_junc_endoDNase_Mg_BS"/>
</dbReference>
<dbReference type="InterPro" id="IPR002176">
    <property type="entry name" value="X-over_junc_endoDNase_RuvC"/>
</dbReference>
<dbReference type="NCBIfam" id="NF000711">
    <property type="entry name" value="PRK00039.2-1"/>
    <property type="match status" value="1"/>
</dbReference>
<dbReference type="NCBIfam" id="TIGR00228">
    <property type="entry name" value="ruvC"/>
    <property type="match status" value="1"/>
</dbReference>
<dbReference type="PANTHER" id="PTHR30194">
    <property type="entry name" value="CROSSOVER JUNCTION ENDODEOXYRIBONUCLEASE RUVC"/>
    <property type="match status" value="1"/>
</dbReference>
<dbReference type="PANTHER" id="PTHR30194:SF3">
    <property type="entry name" value="CROSSOVER JUNCTION ENDODEOXYRIBONUCLEASE RUVC"/>
    <property type="match status" value="1"/>
</dbReference>
<dbReference type="Pfam" id="PF02075">
    <property type="entry name" value="RuvC"/>
    <property type="match status" value="1"/>
</dbReference>
<dbReference type="PRINTS" id="PR00696">
    <property type="entry name" value="RSOLVASERUVC"/>
</dbReference>
<dbReference type="SUPFAM" id="SSF53098">
    <property type="entry name" value="Ribonuclease H-like"/>
    <property type="match status" value="1"/>
</dbReference>
<dbReference type="PROSITE" id="PS01321">
    <property type="entry name" value="RUVC"/>
    <property type="match status" value="1"/>
</dbReference>
<gene>
    <name evidence="1" type="primary">ruvC</name>
    <name type="ordered locus">Sbal_2040</name>
</gene>
<feature type="chain" id="PRO_1000002826" description="Crossover junction endodeoxyribonuclease RuvC">
    <location>
        <begin position="1"/>
        <end position="173"/>
    </location>
</feature>
<feature type="active site" evidence="1">
    <location>
        <position position="8"/>
    </location>
</feature>
<feature type="active site" evidence="1">
    <location>
        <position position="67"/>
    </location>
</feature>
<feature type="active site" evidence="1">
    <location>
        <position position="139"/>
    </location>
</feature>
<feature type="binding site" evidence="1">
    <location>
        <position position="8"/>
    </location>
    <ligand>
        <name>Mg(2+)</name>
        <dbReference type="ChEBI" id="CHEBI:18420"/>
        <label>1</label>
    </ligand>
</feature>
<feature type="binding site" evidence="1">
    <location>
        <position position="67"/>
    </location>
    <ligand>
        <name>Mg(2+)</name>
        <dbReference type="ChEBI" id="CHEBI:18420"/>
        <label>2</label>
    </ligand>
</feature>
<feature type="binding site" evidence="1">
    <location>
        <position position="139"/>
    </location>
    <ligand>
        <name>Mg(2+)</name>
        <dbReference type="ChEBI" id="CHEBI:18420"/>
        <label>1</label>
    </ligand>
</feature>
<evidence type="ECO:0000255" key="1">
    <source>
        <dbReference type="HAMAP-Rule" id="MF_00034"/>
    </source>
</evidence>
<sequence>MAIILGVDPGSRITGYGVIQCQGRHQIYLGSGCIRTSSEELPGRLKQIFDGITEIIRQYQPDEFAIERVFMAKNADSALKLGQARGAAIVAATVANLPVAEYSATQIKSAVVGTGRAQKAQVQHMIQQLLKLPAAPQADAADALGVAVCHYHTSQSLIALSGRATARTYGRYR</sequence>
<organism>
    <name type="scientific">Shewanella baltica (strain OS155 / ATCC BAA-1091)</name>
    <dbReference type="NCBI Taxonomy" id="325240"/>
    <lineage>
        <taxon>Bacteria</taxon>
        <taxon>Pseudomonadati</taxon>
        <taxon>Pseudomonadota</taxon>
        <taxon>Gammaproteobacteria</taxon>
        <taxon>Alteromonadales</taxon>
        <taxon>Shewanellaceae</taxon>
        <taxon>Shewanella</taxon>
    </lineage>
</organism>
<protein>
    <recommendedName>
        <fullName evidence="1">Crossover junction endodeoxyribonuclease RuvC</fullName>
        <ecNumber evidence="1">3.1.21.10</ecNumber>
    </recommendedName>
    <alternativeName>
        <fullName evidence="1">Holliday junction nuclease RuvC</fullName>
    </alternativeName>
    <alternativeName>
        <fullName evidence="1">Holliday junction resolvase RuvC</fullName>
    </alternativeName>
</protein>
<keyword id="KW-0963">Cytoplasm</keyword>
<keyword id="KW-0227">DNA damage</keyword>
<keyword id="KW-0233">DNA recombination</keyword>
<keyword id="KW-0234">DNA repair</keyword>
<keyword id="KW-0238">DNA-binding</keyword>
<keyword id="KW-0255">Endonuclease</keyword>
<keyword id="KW-0378">Hydrolase</keyword>
<keyword id="KW-0460">Magnesium</keyword>
<keyword id="KW-0479">Metal-binding</keyword>
<keyword id="KW-0540">Nuclease</keyword>
<keyword id="KW-1185">Reference proteome</keyword>
<reference key="1">
    <citation type="submission" date="2007-02" db="EMBL/GenBank/DDBJ databases">
        <title>Complete sequence of chromosome of Shewanella baltica OS155.</title>
        <authorList>
            <consortium name="US DOE Joint Genome Institute"/>
            <person name="Copeland A."/>
            <person name="Lucas S."/>
            <person name="Lapidus A."/>
            <person name="Barry K."/>
            <person name="Detter J.C."/>
            <person name="Glavina del Rio T."/>
            <person name="Hammon N."/>
            <person name="Israni S."/>
            <person name="Dalin E."/>
            <person name="Tice H."/>
            <person name="Pitluck S."/>
            <person name="Sims D.R."/>
            <person name="Brettin T."/>
            <person name="Bruce D."/>
            <person name="Han C."/>
            <person name="Tapia R."/>
            <person name="Brainard J."/>
            <person name="Schmutz J."/>
            <person name="Larimer F."/>
            <person name="Land M."/>
            <person name="Hauser L."/>
            <person name="Kyrpides N."/>
            <person name="Mikhailova N."/>
            <person name="Brettar I."/>
            <person name="Klappenbach J."/>
            <person name="Konstantinidis K."/>
            <person name="Rodrigues J."/>
            <person name="Tiedje J."/>
            <person name="Richardson P."/>
        </authorList>
    </citation>
    <scope>NUCLEOTIDE SEQUENCE [LARGE SCALE GENOMIC DNA]</scope>
    <source>
        <strain>OS155 / ATCC BAA-1091</strain>
    </source>
</reference>
<proteinExistence type="inferred from homology"/>
<comment type="function">
    <text evidence="1">The RuvA-RuvB-RuvC complex processes Holliday junction (HJ) DNA during genetic recombination and DNA repair. Endonuclease that resolves HJ intermediates. Cleaves cruciform DNA by making single-stranded nicks across the HJ at symmetrical positions within the homologous arms, yielding a 5'-phosphate and a 3'-hydroxyl group; requires a central core of homology in the junction. The consensus cleavage sequence is 5'-(A/T)TT(C/G)-3'. Cleavage occurs on the 3'-side of the TT dinucleotide at the point of strand exchange. HJ branch migration catalyzed by RuvA-RuvB allows RuvC to scan DNA until it finds its consensus sequence, where it cleaves and resolves the cruciform DNA.</text>
</comment>
<comment type="catalytic activity">
    <reaction evidence="1">
        <text>Endonucleolytic cleavage at a junction such as a reciprocal single-stranded crossover between two homologous DNA duplexes (Holliday junction).</text>
        <dbReference type="EC" id="3.1.21.10"/>
    </reaction>
</comment>
<comment type="cofactor">
    <cofactor evidence="1">
        <name>Mg(2+)</name>
        <dbReference type="ChEBI" id="CHEBI:18420"/>
    </cofactor>
    <text evidence="1">Binds 2 Mg(2+) ion per subunit.</text>
</comment>
<comment type="subunit">
    <text evidence="1">Homodimer which binds Holliday junction (HJ) DNA. The HJ becomes 2-fold symmetrical on binding to RuvC with unstacked arms; it has a different conformation from HJ DNA in complex with RuvA. In the full resolvosome a probable DNA-RuvA(4)-RuvB(12)-RuvC(2) complex forms which resolves the HJ.</text>
</comment>
<comment type="subcellular location">
    <subcellularLocation>
        <location evidence="1">Cytoplasm</location>
    </subcellularLocation>
</comment>
<comment type="similarity">
    <text evidence="1">Belongs to the RuvC family.</text>
</comment>